<accession>Q09GJ8</accession>
<name>SLA_PHIOL</name>
<protein>
    <recommendedName>
        <fullName>Snaclec subunit A</fullName>
    </recommendedName>
    <alternativeName>
        <fullName>C-type lectin subunit A</fullName>
    </alternativeName>
</protein>
<comment type="function">
    <text evidence="1">Interferes with one step of hemostasis (modulation of platelet aggregation, or coagulation cascade, for example).</text>
</comment>
<comment type="subunit">
    <text evidence="1">Heterodimer of subunits A and B; disulfide-linked.</text>
</comment>
<comment type="subcellular location">
    <subcellularLocation>
        <location evidence="5">Secreted</location>
    </subcellularLocation>
</comment>
<comment type="tissue specificity">
    <text evidence="5">Expressed by the venom gland.</text>
</comment>
<comment type="similarity">
    <text evidence="6">Belongs to the snaclec family.</text>
</comment>
<organism>
    <name type="scientific">Philodryas olfersii</name>
    <name type="common">Green snake</name>
    <dbReference type="NCBI Taxonomy" id="120305"/>
    <lineage>
        <taxon>Eukaryota</taxon>
        <taxon>Metazoa</taxon>
        <taxon>Chordata</taxon>
        <taxon>Craniata</taxon>
        <taxon>Vertebrata</taxon>
        <taxon>Euteleostomi</taxon>
        <taxon>Lepidosauria</taxon>
        <taxon>Squamata</taxon>
        <taxon>Bifurcata</taxon>
        <taxon>Unidentata</taxon>
        <taxon>Episquamata</taxon>
        <taxon>Toxicofera</taxon>
        <taxon>Serpentes</taxon>
        <taxon>Colubroidea</taxon>
        <taxon>Dipsadidae</taxon>
        <taxon>Philodryas</taxon>
    </lineage>
</organism>
<reference evidence="6 7" key="1">
    <citation type="journal article" date="2006" name="FEBS Lett.">
        <title>Some aspects of the venom proteome of the Colubridae snake Philodryas olfersii revealed from a Duvernoy's (venom) gland transcriptome.</title>
        <authorList>
            <person name="Ching A.T.C."/>
            <person name="Rocha M.M.T."/>
            <person name="Paes Leme A.F."/>
            <person name="Pimenta D.C."/>
            <person name="Furtado M.F.D."/>
            <person name="Serrano S.M.T."/>
            <person name="Ho P.L."/>
            <person name="Junqueira-de-Azevedo I.L.M."/>
        </authorList>
    </citation>
    <scope>NUCLEOTIDE SEQUENCE [MRNA]</scope>
    <scope>SUBCELLULAR LOCATION</scope>
    <scope>TISSUE SPECIFICITY</scope>
    <source>
        <tissue evidence="5">Venom gland</tissue>
    </source>
</reference>
<reference key="2">
    <citation type="journal article" date="2006" name="FEBS Lett.">
        <authorList>
            <person name="Ching A.T.C."/>
            <person name="Rocha M.M.T."/>
            <person name="Paes Leme A.F."/>
            <person name="Pimenta D.C."/>
            <person name="Furtado M.F.D."/>
            <person name="Serrano S.M.T."/>
            <person name="Ho P.L."/>
            <person name="Junqueira-de-Azevedo I.L.M."/>
        </authorList>
    </citation>
    <scope>ERRATUM OF PUBMED:16857193</scope>
</reference>
<sequence>MGRFILVNLGLLVVAFSLRGSEACCPCGWSSYDKYCYKVFDKRKNWDDAERFCMEQGKGGHLAALGSLEEGKFVGKLAFKKLKEHPTYVWIGLRAQGQGQQCSSRWSDGSRILYENWHPLQSKKCIALSKWTEYLKWYNHICDFTLPFICKFLAEPDDPE</sequence>
<feature type="signal peptide" evidence="3">
    <location>
        <begin position="1"/>
        <end position="23"/>
    </location>
</feature>
<feature type="chain" id="PRO_0000315894" description="Snaclec subunit A">
    <location>
        <begin position="24"/>
        <end position="160"/>
    </location>
</feature>
<feature type="domain" description="C-type lectin" evidence="4">
    <location>
        <begin position="32"/>
        <end position="151"/>
    </location>
</feature>
<feature type="disulfide bond" evidence="2 4">
    <location>
        <begin position="25"/>
        <end position="36"/>
    </location>
</feature>
<feature type="disulfide bond" evidence="2 4">
    <location>
        <begin position="53"/>
        <end position="150"/>
    </location>
</feature>
<feature type="disulfide bond" description="Interchain (with C-98 in subunit B)" evidence="4">
    <location>
        <position position="102"/>
    </location>
</feature>
<feature type="disulfide bond" evidence="2 4">
    <location>
        <begin position="125"/>
        <end position="142"/>
    </location>
</feature>
<keyword id="KW-1015">Disulfide bond</keyword>
<keyword id="KW-1199">Hemostasis impairing toxin</keyword>
<keyword id="KW-0964">Secreted</keyword>
<keyword id="KW-0732">Signal</keyword>
<keyword id="KW-0800">Toxin</keyword>
<proteinExistence type="evidence at transcript level"/>
<evidence type="ECO:0000250" key="1"/>
<evidence type="ECO:0000250" key="2">
    <source>
        <dbReference type="UniProtKB" id="P23806"/>
    </source>
</evidence>
<evidence type="ECO:0000255" key="3"/>
<evidence type="ECO:0000255" key="4">
    <source>
        <dbReference type="PROSITE-ProRule" id="PRU00040"/>
    </source>
</evidence>
<evidence type="ECO:0000269" key="5">
    <source>
    </source>
</evidence>
<evidence type="ECO:0000305" key="6"/>
<evidence type="ECO:0000312" key="7">
    <source>
        <dbReference type="EMBL" id="ABI74697.1"/>
    </source>
</evidence>
<dbReference type="EMBL" id="DQ912660">
    <property type="protein sequence ID" value="ABI74697.1"/>
    <property type="molecule type" value="mRNA"/>
</dbReference>
<dbReference type="SMR" id="Q09GJ8"/>
<dbReference type="GO" id="GO:0005576">
    <property type="term" value="C:extracellular region"/>
    <property type="evidence" value="ECO:0007669"/>
    <property type="project" value="UniProtKB-SubCell"/>
</dbReference>
<dbReference type="GO" id="GO:0090729">
    <property type="term" value="F:toxin activity"/>
    <property type="evidence" value="ECO:0007669"/>
    <property type="project" value="UniProtKB-KW"/>
</dbReference>
<dbReference type="FunFam" id="3.10.100.10:FF:000087">
    <property type="entry name" value="Snaclec rhodocetin subunit delta"/>
    <property type="match status" value="1"/>
</dbReference>
<dbReference type="Gene3D" id="3.10.100.10">
    <property type="entry name" value="Mannose-Binding Protein A, subunit A"/>
    <property type="match status" value="1"/>
</dbReference>
<dbReference type="InterPro" id="IPR001304">
    <property type="entry name" value="C-type_lectin-like"/>
</dbReference>
<dbReference type="InterPro" id="IPR016186">
    <property type="entry name" value="C-type_lectin-like/link_sf"/>
</dbReference>
<dbReference type="InterPro" id="IPR050111">
    <property type="entry name" value="C-type_lectin/snaclec_domain"/>
</dbReference>
<dbReference type="InterPro" id="IPR016187">
    <property type="entry name" value="CTDL_fold"/>
</dbReference>
<dbReference type="PANTHER" id="PTHR22803">
    <property type="entry name" value="MANNOSE, PHOSPHOLIPASE, LECTIN RECEPTOR RELATED"/>
    <property type="match status" value="1"/>
</dbReference>
<dbReference type="Pfam" id="PF00059">
    <property type="entry name" value="Lectin_C"/>
    <property type="match status" value="1"/>
</dbReference>
<dbReference type="PRINTS" id="PR01504">
    <property type="entry name" value="PNCREATITSAP"/>
</dbReference>
<dbReference type="SMART" id="SM00034">
    <property type="entry name" value="CLECT"/>
    <property type="match status" value="1"/>
</dbReference>
<dbReference type="SUPFAM" id="SSF56436">
    <property type="entry name" value="C-type lectin-like"/>
    <property type="match status" value="1"/>
</dbReference>
<dbReference type="PROSITE" id="PS50041">
    <property type="entry name" value="C_TYPE_LECTIN_2"/>
    <property type="match status" value="1"/>
</dbReference>